<accession>Q3IXC0</accession>
<protein>
    <recommendedName>
        <fullName evidence="1">Protein RnfH</fullName>
    </recommendedName>
</protein>
<keyword id="KW-1185">Reference proteome</keyword>
<comment type="similarity">
    <text evidence="1">Belongs to the UPF0125 (RnfH) family.</text>
</comment>
<feature type="chain" id="PRO_1000013593" description="Protein RnfH">
    <location>
        <begin position="1"/>
        <end position="85"/>
    </location>
</feature>
<proteinExistence type="inferred from homology"/>
<organism>
    <name type="scientific">Cereibacter sphaeroides (strain ATCC 17023 / DSM 158 / JCM 6121 / CCUG 31486 / LMG 2827 / NBRC 12203 / NCIMB 8253 / ATH 2.4.1.)</name>
    <name type="common">Rhodobacter sphaeroides</name>
    <dbReference type="NCBI Taxonomy" id="272943"/>
    <lineage>
        <taxon>Bacteria</taxon>
        <taxon>Pseudomonadati</taxon>
        <taxon>Pseudomonadota</taxon>
        <taxon>Alphaproteobacteria</taxon>
        <taxon>Rhodobacterales</taxon>
        <taxon>Paracoccaceae</taxon>
        <taxon>Cereibacter</taxon>
    </lineage>
</organism>
<sequence length="85" mass="9423">MIVGVAYAKPTVQVWKHVDVPEGTSAREAIERSGLLAQFPEIDLAVNKVGIFGAICPLDRTLAEGDRVEIYRPIHPEAELLEKKR</sequence>
<reference key="1">
    <citation type="submission" date="2005-09" db="EMBL/GenBank/DDBJ databases">
        <title>Complete sequence of chromosome 2 of Rhodobacter sphaeroides 2.4.1.</title>
        <authorList>
            <person name="Copeland A."/>
            <person name="Lucas S."/>
            <person name="Lapidus A."/>
            <person name="Barry K."/>
            <person name="Detter J.C."/>
            <person name="Glavina T."/>
            <person name="Hammon N."/>
            <person name="Israni S."/>
            <person name="Pitluck S."/>
            <person name="Richardson P."/>
            <person name="Mackenzie C."/>
            <person name="Choudhary M."/>
            <person name="Larimer F."/>
            <person name="Hauser L.J."/>
            <person name="Land M."/>
            <person name="Donohue T.J."/>
            <person name="Kaplan S."/>
        </authorList>
    </citation>
    <scope>NUCLEOTIDE SEQUENCE [LARGE SCALE GENOMIC DNA]</scope>
    <source>
        <strain>ATCC 17023 / DSM 158 / JCM 6121 / CCUG 31486 / LMG 2827 / NBRC 12203 / NCIMB 8253 / ATH 2.4.1.</strain>
    </source>
</reference>
<name>RNFH_CERS4</name>
<dbReference type="EMBL" id="CP000144">
    <property type="protein sequence ID" value="ABA80814.1"/>
    <property type="molecule type" value="Genomic_DNA"/>
</dbReference>
<dbReference type="RefSeq" id="WP_002723777.1">
    <property type="nucleotide sequence ID" value="NZ_CP030272.1"/>
</dbReference>
<dbReference type="RefSeq" id="YP_354715.1">
    <property type="nucleotide sequence ID" value="NC_007494.2"/>
</dbReference>
<dbReference type="SMR" id="Q3IXC0"/>
<dbReference type="STRING" id="272943.RSP_3198"/>
<dbReference type="EnsemblBacteria" id="ABA80814">
    <property type="protein sequence ID" value="ABA80814"/>
    <property type="gene ID" value="RSP_3198"/>
</dbReference>
<dbReference type="GeneID" id="3721806"/>
<dbReference type="KEGG" id="rsp:RSP_3198"/>
<dbReference type="PATRIC" id="fig|272943.9.peg.3628"/>
<dbReference type="eggNOG" id="COG2914">
    <property type="taxonomic scope" value="Bacteria"/>
</dbReference>
<dbReference type="OrthoDB" id="9796575at2"/>
<dbReference type="PhylomeDB" id="Q3IXC0"/>
<dbReference type="Proteomes" id="UP000002703">
    <property type="component" value="Chromosome 2"/>
</dbReference>
<dbReference type="Gene3D" id="3.10.20.280">
    <property type="entry name" value="RnfH-like"/>
    <property type="match status" value="1"/>
</dbReference>
<dbReference type="HAMAP" id="MF_00460">
    <property type="entry name" value="UPF0125_RnfH"/>
    <property type="match status" value="1"/>
</dbReference>
<dbReference type="InterPro" id="IPR016155">
    <property type="entry name" value="Mopterin_synth/thiamin_S_b"/>
</dbReference>
<dbReference type="InterPro" id="IPR005346">
    <property type="entry name" value="RnfH"/>
</dbReference>
<dbReference type="InterPro" id="IPR037021">
    <property type="entry name" value="RnfH_sf"/>
</dbReference>
<dbReference type="PANTHER" id="PTHR37483">
    <property type="entry name" value="UPF0125 PROTEIN RATB"/>
    <property type="match status" value="1"/>
</dbReference>
<dbReference type="PANTHER" id="PTHR37483:SF1">
    <property type="entry name" value="UPF0125 PROTEIN RATB"/>
    <property type="match status" value="1"/>
</dbReference>
<dbReference type="Pfam" id="PF03658">
    <property type="entry name" value="Ub-RnfH"/>
    <property type="match status" value="1"/>
</dbReference>
<dbReference type="SUPFAM" id="SSF54285">
    <property type="entry name" value="MoaD/ThiS"/>
    <property type="match status" value="1"/>
</dbReference>
<gene>
    <name evidence="1" type="primary">rnfH</name>
    <name type="ordered locus">RHOS4_32460</name>
    <name type="ORF">RSP_3198</name>
</gene>
<evidence type="ECO:0000255" key="1">
    <source>
        <dbReference type="HAMAP-Rule" id="MF_00460"/>
    </source>
</evidence>